<sequence length="238" mass="25973">MTPHINAPAGAFADVVLMPGDPLRAKYIAETFLENAEQVTNVRNMFGYTGTYKGRRISIMGHGMGIPSCSIYAKELITEYGVKKIIRVGSCGAVRADVKLRDIVIGSGACTDSKVNRIRFRDNDFAAIADFEMTLAAYQVAKQKNISVQVGNLFSADLFYTPDVAMFDVMEKYGILGVEMEAAGIYVVAAEYGVKSLAICTVSDHIRSGEKLSAEDRQLTFNEMIEIALESVLIGDQT</sequence>
<protein>
    <recommendedName>
        <fullName evidence="2">Purine nucleoside phosphorylase DeoD-type</fullName>
        <shortName evidence="2">PNP</shortName>
        <ecNumber evidence="2">2.4.2.1</ecNumber>
    </recommendedName>
</protein>
<keyword id="KW-0328">Glycosyltransferase</keyword>
<keyword id="KW-1185">Reference proteome</keyword>
<keyword id="KW-0808">Transferase</keyword>
<reference key="1">
    <citation type="submission" date="2003-06" db="EMBL/GenBank/DDBJ databases">
        <title>The complete genome sequence of Haemophilus ducreyi.</title>
        <authorList>
            <person name="Munson R.S. Jr."/>
            <person name="Ray W.C."/>
            <person name="Mahairas G."/>
            <person name="Sabo P."/>
            <person name="Mungur R."/>
            <person name="Johnson L."/>
            <person name="Nguyen D."/>
            <person name="Wang J."/>
            <person name="Forst C."/>
            <person name="Hood L."/>
        </authorList>
    </citation>
    <scope>NUCLEOTIDE SEQUENCE [LARGE SCALE GENOMIC DNA]</scope>
    <source>
        <strain>35000HP / ATCC 700724</strain>
    </source>
</reference>
<comment type="function">
    <text evidence="2">Catalyzes the reversible phosphorolytic breakdown of the N-glycosidic bond in the beta-(deoxy)ribonucleoside molecules, with the formation of the corresponding free purine bases and pentose-1-phosphate.</text>
</comment>
<comment type="catalytic activity">
    <reaction evidence="2">
        <text>a purine D-ribonucleoside + phosphate = a purine nucleobase + alpha-D-ribose 1-phosphate</text>
        <dbReference type="Rhea" id="RHEA:19805"/>
        <dbReference type="ChEBI" id="CHEBI:26386"/>
        <dbReference type="ChEBI" id="CHEBI:43474"/>
        <dbReference type="ChEBI" id="CHEBI:57720"/>
        <dbReference type="ChEBI" id="CHEBI:142355"/>
        <dbReference type="EC" id="2.4.2.1"/>
    </reaction>
</comment>
<comment type="catalytic activity">
    <reaction evidence="2">
        <text>a purine 2'-deoxy-D-ribonucleoside + phosphate = a purine nucleobase + 2-deoxy-alpha-D-ribose 1-phosphate</text>
        <dbReference type="Rhea" id="RHEA:36431"/>
        <dbReference type="ChEBI" id="CHEBI:26386"/>
        <dbReference type="ChEBI" id="CHEBI:43474"/>
        <dbReference type="ChEBI" id="CHEBI:57259"/>
        <dbReference type="ChEBI" id="CHEBI:142361"/>
        <dbReference type="EC" id="2.4.2.1"/>
    </reaction>
</comment>
<comment type="subunit">
    <text evidence="2">Homohexamer; trimer of homodimers.</text>
</comment>
<comment type="similarity">
    <text evidence="2">Belongs to the PNP/UDP phosphorylase family.</text>
</comment>
<name>DEOD_HAEDU</name>
<gene>
    <name evidence="2" type="primary">deoD</name>
    <name type="ordered locus">HD_0889</name>
</gene>
<feature type="chain" id="PRO_0000063134" description="Purine nucleoside phosphorylase DeoD-type">
    <location>
        <begin position="1"/>
        <end position="238"/>
    </location>
</feature>
<feature type="active site" description="Proton donor" evidence="2">
    <location>
        <position position="204"/>
    </location>
</feature>
<feature type="binding site" evidence="1">
    <location>
        <position position="4"/>
    </location>
    <ligand>
        <name>a purine D-ribonucleoside</name>
        <dbReference type="ChEBI" id="CHEBI:142355"/>
        <note>ligand shared between dimeric partners</note>
    </ligand>
</feature>
<feature type="binding site" description="in other chain" evidence="1">
    <location>
        <position position="20"/>
    </location>
    <ligand>
        <name>phosphate</name>
        <dbReference type="ChEBI" id="CHEBI:43474"/>
        <note>ligand shared between dimeric partners</note>
    </ligand>
</feature>
<feature type="binding site" description="in other chain" evidence="1">
    <location>
        <position position="24"/>
    </location>
    <ligand>
        <name>phosphate</name>
        <dbReference type="ChEBI" id="CHEBI:43474"/>
        <note>ligand shared between dimeric partners</note>
    </ligand>
</feature>
<feature type="binding site" evidence="1">
    <location>
        <position position="43"/>
    </location>
    <ligand>
        <name>phosphate</name>
        <dbReference type="ChEBI" id="CHEBI:43474"/>
        <note>ligand shared between dimeric partners</note>
    </ligand>
</feature>
<feature type="binding site" description="in other chain" evidence="1">
    <location>
        <begin position="87"/>
        <end position="90"/>
    </location>
    <ligand>
        <name>phosphate</name>
        <dbReference type="ChEBI" id="CHEBI:43474"/>
        <note>ligand shared between dimeric partners</note>
    </ligand>
</feature>
<feature type="binding site" description="in other chain" evidence="1">
    <location>
        <begin position="179"/>
        <end position="181"/>
    </location>
    <ligand>
        <name>a purine D-ribonucleoside</name>
        <dbReference type="ChEBI" id="CHEBI:142355"/>
        <note>ligand shared between dimeric partners</note>
    </ligand>
</feature>
<feature type="binding site" description="in other chain" evidence="1">
    <location>
        <begin position="203"/>
        <end position="204"/>
    </location>
    <ligand>
        <name>a purine D-ribonucleoside</name>
        <dbReference type="ChEBI" id="CHEBI:142355"/>
        <note>ligand shared between dimeric partners</note>
    </ligand>
</feature>
<feature type="site" description="Important for catalytic activity" evidence="2">
    <location>
        <position position="217"/>
    </location>
</feature>
<dbReference type="EC" id="2.4.2.1" evidence="2"/>
<dbReference type="EMBL" id="AE017143">
    <property type="protein sequence ID" value="AAP95775.1"/>
    <property type="molecule type" value="Genomic_DNA"/>
</dbReference>
<dbReference type="RefSeq" id="WP_010944825.1">
    <property type="nucleotide sequence ID" value="NC_002940.2"/>
</dbReference>
<dbReference type="SMR" id="Q7VMS8"/>
<dbReference type="STRING" id="233412.HD_0889"/>
<dbReference type="KEGG" id="hdu:HD_0889"/>
<dbReference type="eggNOG" id="COG0813">
    <property type="taxonomic scope" value="Bacteria"/>
</dbReference>
<dbReference type="HOGENOM" id="CLU_068457_2_0_6"/>
<dbReference type="OrthoDB" id="9782889at2"/>
<dbReference type="Proteomes" id="UP000001022">
    <property type="component" value="Chromosome"/>
</dbReference>
<dbReference type="GO" id="GO:0005829">
    <property type="term" value="C:cytosol"/>
    <property type="evidence" value="ECO:0007669"/>
    <property type="project" value="TreeGrafter"/>
</dbReference>
<dbReference type="GO" id="GO:0004731">
    <property type="term" value="F:purine-nucleoside phosphorylase activity"/>
    <property type="evidence" value="ECO:0007669"/>
    <property type="project" value="UniProtKB-UniRule"/>
</dbReference>
<dbReference type="GO" id="GO:0006152">
    <property type="term" value="P:purine nucleoside catabolic process"/>
    <property type="evidence" value="ECO:0007669"/>
    <property type="project" value="TreeGrafter"/>
</dbReference>
<dbReference type="CDD" id="cd09006">
    <property type="entry name" value="PNP_EcPNPI-like"/>
    <property type="match status" value="1"/>
</dbReference>
<dbReference type="Gene3D" id="3.40.50.1580">
    <property type="entry name" value="Nucleoside phosphorylase domain"/>
    <property type="match status" value="1"/>
</dbReference>
<dbReference type="HAMAP" id="MF_01627">
    <property type="entry name" value="Pur_nucleosid_phosp"/>
    <property type="match status" value="1"/>
</dbReference>
<dbReference type="InterPro" id="IPR004402">
    <property type="entry name" value="DeoD-type"/>
</dbReference>
<dbReference type="InterPro" id="IPR018016">
    <property type="entry name" value="Nucleoside_phosphorylase_CS"/>
</dbReference>
<dbReference type="InterPro" id="IPR000845">
    <property type="entry name" value="Nucleoside_phosphorylase_d"/>
</dbReference>
<dbReference type="InterPro" id="IPR035994">
    <property type="entry name" value="Nucleoside_phosphorylase_sf"/>
</dbReference>
<dbReference type="NCBIfam" id="TIGR00107">
    <property type="entry name" value="deoD"/>
    <property type="match status" value="1"/>
</dbReference>
<dbReference type="NCBIfam" id="NF004489">
    <property type="entry name" value="PRK05819.1"/>
    <property type="match status" value="1"/>
</dbReference>
<dbReference type="NCBIfam" id="NF009914">
    <property type="entry name" value="PRK13374.1"/>
    <property type="match status" value="1"/>
</dbReference>
<dbReference type="PANTHER" id="PTHR43691:SF2">
    <property type="entry name" value="PURINE NUCLEOSIDE PHOSPHORYLASE DEOD-TYPE"/>
    <property type="match status" value="1"/>
</dbReference>
<dbReference type="PANTHER" id="PTHR43691">
    <property type="entry name" value="URIDINE PHOSPHORYLASE"/>
    <property type="match status" value="1"/>
</dbReference>
<dbReference type="Pfam" id="PF01048">
    <property type="entry name" value="PNP_UDP_1"/>
    <property type="match status" value="1"/>
</dbReference>
<dbReference type="SUPFAM" id="SSF53167">
    <property type="entry name" value="Purine and uridine phosphorylases"/>
    <property type="match status" value="1"/>
</dbReference>
<dbReference type="PROSITE" id="PS01232">
    <property type="entry name" value="PNP_UDP_1"/>
    <property type="match status" value="1"/>
</dbReference>
<proteinExistence type="inferred from homology"/>
<organism>
    <name type="scientific">Haemophilus ducreyi (strain 35000HP / ATCC 700724)</name>
    <dbReference type="NCBI Taxonomy" id="233412"/>
    <lineage>
        <taxon>Bacteria</taxon>
        <taxon>Pseudomonadati</taxon>
        <taxon>Pseudomonadota</taxon>
        <taxon>Gammaproteobacteria</taxon>
        <taxon>Pasteurellales</taxon>
        <taxon>Pasteurellaceae</taxon>
        <taxon>Haemophilus</taxon>
    </lineage>
</organism>
<evidence type="ECO:0000250" key="1">
    <source>
        <dbReference type="UniProtKB" id="P50389"/>
    </source>
</evidence>
<evidence type="ECO:0000255" key="2">
    <source>
        <dbReference type="HAMAP-Rule" id="MF_01627"/>
    </source>
</evidence>
<accession>Q7VMS8</accession>